<comment type="catalytic activity">
    <reaction evidence="1">
        <text>a quinone + NADH + H(+) = a quinol + NAD(+)</text>
        <dbReference type="Rhea" id="RHEA:46160"/>
        <dbReference type="ChEBI" id="CHEBI:15378"/>
        <dbReference type="ChEBI" id="CHEBI:24646"/>
        <dbReference type="ChEBI" id="CHEBI:57540"/>
        <dbReference type="ChEBI" id="CHEBI:57945"/>
        <dbReference type="ChEBI" id="CHEBI:132124"/>
        <dbReference type="EC" id="1.6.5.2"/>
    </reaction>
</comment>
<comment type="catalytic activity">
    <reaction evidence="1">
        <text>a quinone + NADPH + H(+) = a quinol + NADP(+)</text>
        <dbReference type="Rhea" id="RHEA:46164"/>
        <dbReference type="ChEBI" id="CHEBI:15378"/>
        <dbReference type="ChEBI" id="CHEBI:24646"/>
        <dbReference type="ChEBI" id="CHEBI:57783"/>
        <dbReference type="ChEBI" id="CHEBI:58349"/>
        <dbReference type="ChEBI" id="CHEBI:132124"/>
        <dbReference type="EC" id="1.6.5.2"/>
    </reaction>
</comment>
<comment type="cofactor">
    <cofactor evidence="1">
        <name>FMN</name>
        <dbReference type="ChEBI" id="CHEBI:58210"/>
    </cofactor>
    <text evidence="1">Binds 1 FMN per monomer.</text>
</comment>
<comment type="similarity">
    <text evidence="1">Belongs to the WrbA family.</text>
</comment>
<organism>
    <name type="scientific">Yersinia pseudotuberculosis serotype O:3 (strain YPIII)</name>
    <dbReference type="NCBI Taxonomy" id="502800"/>
    <lineage>
        <taxon>Bacteria</taxon>
        <taxon>Pseudomonadati</taxon>
        <taxon>Pseudomonadota</taxon>
        <taxon>Gammaproteobacteria</taxon>
        <taxon>Enterobacterales</taxon>
        <taxon>Yersiniaceae</taxon>
        <taxon>Yersinia</taxon>
    </lineage>
</organism>
<reference key="1">
    <citation type="submission" date="2008-02" db="EMBL/GenBank/DDBJ databases">
        <title>Complete sequence of Yersinia pseudotuberculosis YPIII.</title>
        <authorList>
            <consortium name="US DOE Joint Genome Institute"/>
            <person name="Copeland A."/>
            <person name="Lucas S."/>
            <person name="Lapidus A."/>
            <person name="Glavina del Rio T."/>
            <person name="Dalin E."/>
            <person name="Tice H."/>
            <person name="Bruce D."/>
            <person name="Goodwin L."/>
            <person name="Pitluck S."/>
            <person name="Munk A.C."/>
            <person name="Brettin T."/>
            <person name="Detter J.C."/>
            <person name="Han C."/>
            <person name="Tapia R."/>
            <person name="Schmutz J."/>
            <person name="Larimer F."/>
            <person name="Land M."/>
            <person name="Hauser L."/>
            <person name="Challacombe J.F."/>
            <person name="Green L."/>
            <person name="Lindler L.E."/>
            <person name="Nikolich M.P."/>
            <person name="Richardson P."/>
        </authorList>
    </citation>
    <scope>NUCLEOTIDE SEQUENCE [LARGE SCALE GENOMIC DNA]</scope>
    <source>
        <strain>YPIII</strain>
    </source>
</reference>
<name>NQOR_YERPY</name>
<feature type="chain" id="PRO_1000200651" description="NAD(P)H dehydrogenase (quinone)">
    <location>
        <begin position="1"/>
        <end position="199"/>
    </location>
</feature>
<feature type="domain" description="Flavodoxin-like" evidence="1">
    <location>
        <begin position="4"/>
        <end position="190"/>
    </location>
</feature>
<feature type="binding site" evidence="1">
    <location>
        <begin position="10"/>
        <end position="15"/>
    </location>
    <ligand>
        <name>FMN</name>
        <dbReference type="ChEBI" id="CHEBI:58210"/>
    </ligand>
</feature>
<feature type="binding site" evidence="1">
    <location>
        <position position="12"/>
    </location>
    <ligand>
        <name>NAD(+)</name>
        <dbReference type="ChEBI" id="CHEBI:57540"/>
    </ligand>
</feature>
<feature type="binding site" evidence="1">
    <location>
        <begin position="79"/>
        <end position="81"/>
    </location>
    <ligand>
        <name>FMN</name>
        <dbReference type="ChEBI" id="CHEBI:58210"/>
    </ligand>
</feature>
<feature type="binding site" evidence="1">
    <location>
        <position position="99"/>
    </location>
    <ligand>
        <name>substrate</name>
    </ligand>
</feature>
<feature type="binding site" evidence="1">
    <location>
        <begin position="114"/>
        <end position="119"/>
    </location>
    <ligand>
        <name>FMN</name>
        <dbReference type="ChEBI" id="CHEBI:58210"/>
    </ligand>
</feature>
<feature type="binding site" evidence="1">
    <location>
        <position position="134"/>
    </location>
    <ligand>
        <name>FMN</name>
        <dbReference type="ChEBI" id="CHEBI:58210"/>
    </ligand>
</feature>
<dbReference type="EC" id="1.6.5.2" evidence="1"/>
<dbReference type="EMBL" id="CP000950">
    <property type="protein sequence ID" value="ACA68640.1"/>
    <property type="molecule type" value="Genomic_DNA"/>
</dbReference>
<dbReference type="SMR" id="B1JNA9"/>
<dbReference type="KEGG" id="ypy:YPK_2363"/>
<dbReference type="PATRIC" id="fig|502800.11.peg.3049"/>
<dbReference type="GO" id="GO:0016020">
    <property type="term" value="C:membrane"/>
    <property type="evidence" value="ECO:0007669"/>
    <property type="project" value="TreeGrafter"/>
</dbReference>
<dbReference type="GO" id="GO:0050660">
    <property type="term" value="F:flavin adenine dinucleotide binding"/>
    <property type="evidence" value="ECO:0007669"/>
    <property type="project" value="UniProtKB-UniRule"/>
</dbReference>
<dbReference type="GO" id="GO:0010181">
    <property type="term" value="F:FMN binding"/>
    <property type="evidence" value="ECO:0007669"/>
    <property type="project" value="InterPro"/>
</dbReference>
<dbReference type="GO" id="GO:0051287">
    <property type="term" value="F:NAD binding"/>
    <property type="evidence" value="ECO:0007669"/>
    <property type="project" value="UniProtKB-UniRule"/>
</dbReference>
<dbReference type="GO" id="GO:0050136">
    <property type="term" value="F:NADH:ubiquinone reductase (non-electrogenic) activity"/>
    <property type="evidence" value="ECO:0007669"/>
    <property type="project" value="RHEA"/>
</dbReference>
<dbReference type="GO" id="GO:0050661">
    <property type="term" value="F:NADP binding"/>
    <property type="evidence" value="ECO:0007669"/>
    <property type="project" value="UniProtKB-UniRule"/>
</dbReference>
<dbReference type="GO" id="GO:0008753">
    <property type="term" value="F:NADPH dehydrogenase (quinone) activity"/>
    <property type="evidence" value="ECO:0007669"/>
    <property type="project" value="RHEA"/>
</dbReference>
<dbReference type="FunFam" id="3.40.50.360:FF:000004">
    <property type="entry name" value="NAD(P)H dehydrogenase (quinone)"/>
    <property type="match status" value="1"/>
</dbReference>
<dbReference type="Gene3D" id="3.40.50.360">
    <property type="match status" value="1"/>
</dbReference>
<dbReference type="HAMAP" id="MF_01017">
    <property type="entry name" value="NQOR"/>
    <property type="match status" value="1"/>
</dbReference>
<dbReference type="InterPro" id="IPR008254">
    <property type="entry name" value="Flavodoxin/NO_synth"/>
</dbReference>
<dbReference type="InterPro" id="IPR029039">
    <property type="entry name" value="Flavoprotein-like_sf"/>
</dbReference>
<dbReference type="InterPro" id="IPR010089">
    <property type="entry name" value="Flavoprotein_WrbA-like"/>
</dbReference>
<dbReference type="InterPro" id="IPR005025">
    <property type="entry name" value="FMN_Rdtase-like_dom"/>
</dbReference>
<dbReference type="InterPro" id="IPR037513">
    <property type="entry name" value="NQO"/>
</dbReference>
<dbReference type="NCBIfam" id="TIGR01755">
    <property type="entry name" value="flav_wrbA"/>
    <property type="match status" value="1"/>
</dbReference>
<dbReference type="NCBIfam" id="NF002999">
    <property type="entry name" value="PRK03767.1"/>
    <property type="match status" value="1"/>
</dbReference>
<dbReference type="PANTHER" id="PTHR30546">
    <property type="entry name" value="FLAVODOXIN-RELATED PROTEIN WRBA-RELATED"/>
    <property type="match status" value="1"/>
</dbReference>
<dbReference type="PANTHER" id="PTHR30546:SF23">
    <property type="entry name" value="FLAVOPROTEIN-LIKE PROTEIN YCP4-RELATED"/>
    <property type="match status" value="1"/>
</dbReference>
<dbReference type="Pfam" id="PF03358">
    <property type="entry name" value="FMN_red"/>
    <property type="match status" value="1"/>
</dbReference>
<dbReference type="SUPFAM" id="SSF52218">
    <property type="entry name" value="Flavoproteins"/>
    <property type="match status" value="1"/>
</dbReference>
<dbReference type="PROSITE" id="PS50902">
    <property type="entry name" value="FLAVODOXIN_LIKE"/>
    <property type="match status" value="1"/>
</dbReference>
<keyword id="KW-0285">Flavoprotein</keyword>
<keyword id="KW-0288">FMN</keyword>
<keyword id="KW-0520">NAD</keyword>
<keyword id="KW-0521">NADP</keyword>
<keyword id="KW-0547">Nucleotide-binding</keyword>
<keyword id="KW-0560">Oxidoreductase</keyword>
<gene>
    <name type="ordered locus">YPK_2363</name>
</gene>
<sequence length="199" mass="20808">MAKILVLYYSMYGHIETLAGAIAEGARKVSGVDVTIKRVPETMPAEAFAKAGGKTNQQAPVATPHELADYDGIIFGTPTRFGNMSGQMRTFLDQTGGLWASGALYGKVASVFASTGTGGGQEHTITSTWTTLAHHGFIIVPIGYGAKELFDVSQTRGGTPYGATTIAGGDGSRQPSAEELAIARFQGEHVAKITAKLKG</sequence>
<proteinExistence type="inferred from homology"/>
<accession>B1JNA9</accession>
<evidence type="ECO:0000255" key="1">
    <source>
        <dbReference type="HAMAP-Rule" id="MF_01017"/>
    </source>
</evidence>
<protein>
    <recommendedName>
        <fullName evidence="1">NAD(P)H dehydrogenase (quinone)</fullName>
        <ecNumber evidence="1">1.6.5.2</ecNumber>
    </recommendedName>
    <alternativeName>
        <fullName>Flavoprotein WrbA</fullName>
    </alternativeName>
    <alternativeName>
        <fullName evidence="1">NAD(P)H:quinone oxidoreductase</fullName>
        <shortName evidence="1">NQO</shortName>
    </alternativeName>
</protein>